<sequence>MITLKTVRELRAAIARARGDGKRIALVPTMGNLHAGHIALVEKARQRADFVVASIFVNPLQFGPAEDLDKYPRTLAADQEKLLEGGCNLLFAPNAEEMYPGGMQGQTRISVPVVSEGLCGAARPGHFEGVATVVTKLFNIAQPDIALFGEKDYQQLAVIRTLVRDLNMPIQIFGEPTVRAADGLALSSRNGYLNDEQRNVAPALYRILSDIGTAIQAGEQDFAGLCARGLEALRQAGFRPDYLEIREAASLRPAAPGDLRLVVLAAAYLGNTRLIDNLSVDIA</sequence>
<proteinExistence type="inferred from homology"/>
<protein>
    <recommendedName>
        <fullName evidence="1">Pantothenate synthetase</fullName>
        <shortName evidence="1">PS</shortName>
        <ecNumber evidence="1">6.3.2.1</ecNumber>
    </recommendedName>
    <alternativeName>
        <fullName evidence="1">Pantoate--beta-alanine ligase</fullName>
    </alternativeName>
    <alternativeName>
        <fullName evidence="1">Pantoate-activating enzyme</fullName>
    </alternativeName>
</protein>
<feature type="chain" id="PRO_1000203484" description="Pantothenate synthetase">
    <location>
        <begin position="1"/>
        <end position="283"/>
    </location>
</feature>
<feature type="active site" description="Proton donor" evidence="1">
    <location>
        <position position="37"/>
    </location>
</feature>
<feature type="binding site" evidence="1">
    <location>
        <begin position="30"/>
        <end position="37"/>
    </location>
    <ligand>
        <name>ATP</name>
        <dbReference type="ChEBI" id="CHEBI:30616"/>
    </ligand>
</feature>
<feature type="binding site" evidence="1">
    <location>
        <position position="61"/>
    </location>
    <ligand>
        <name>(R)-pantoate</name>
        <dbReference type="ChEBI" id="CHEBI:15980"/>
    </ligand>
</feature>
<feature type="binding site" evidence="1">
    <location>
        <position position="61"/>
    </location>
    <ligand>
        <name>beta-alanine</name>
        <dbReference type="ChEBI" id="CHEBI:57966"/>
    </ligand>
</feature>
<feature type="binding site" evidence="1">
    <location>
        <begin position="149"/>
        <end position="152"/>
    </location>
    <ligand>
        <name>ATP</name>
        <dbReference type="ChEBI" id="CHEBI:30616"/>
    </ligand>
</feature>
<feature type="binding site" evidence="1">
    <location>
        <position position="155"/>
    </location>
    <ligand>
        <name>(R)-pantoate</name>
        <dbReference type="ChEBI" id="CHEBI:15980"/>
    </ligand>
</feature>
<feature type="binding site" evidence="1">
    <location>
        <position position="178"/>
    </location>
    <ligand>
        <name>ATP</name>
        <dbReference type="ChEBI" id="CHEBI:30616"/>
    </ligand>
</feature>
<feature type="binding site" evidence="1">
    <location>
        <begin position="186"/>
        <end position="189"/>
    </location>
    <ligand>
        <name>ATP</name>
        <dbReference type="ChEBI" id="CHEBI:30616"/>
    </ligand>
</feature>
<dbReference type="EC" id="6.3.2.1" evidence="1"/>
<dbReference type="EMBL" id="CP001157">
    <property type="protein sequence ID" value="ACO80395.1"/>
    <property type="molecule type" value="Genomic_DNA"/>
</dbReference>
<dbReference type="RefSeq" id="WP_012702763.1">
    <property type="nucleotide sequence ID" value="NC_012560.1"/>
</dbReference>
<dbReference type="SMR" id="C1DFJ9"/>
<dbReference type="STRING" id="322710.Avin_42720"/>
<dbReference type="EnsemblBacteria" id="ACO80395">
    <property type="protein sequence ID" value="ACO80395"/>
    <property type="gene ID" value="Avin_42720"/>
</dbReference>
<dbReference type="GeneID" id="88187186"/>
<dbReference type="KEGG" id="avn:Avin_42720"/>
<dbReference type="eggNOG" id="COG0414">
    <property type="taxonomic scope" value="Bacteria"/>
</dbReference>
<dbReference type="HOGENOM" id="CLU_047148_0_0_6"/>
<dbReference type="OrthoDB" id="9773087at2"/>
<dbReference type="UniPathway" id="UPA00028">
    <property type="reaction ID" value="UER00005"/>
</dbReference>
<dbReference type="Proteomes" id="UP000002424">
    <property type="component" value="Chromosome"/>
</dbReference>
<dbReference type="GO" id="GO:0005829">
    <property type="term" value="C:cytosol"/>
    <property type="evidence" value="ECO:0007669"/>
    <property type="project" value="TreeGrafter"/>
</dbReference>
<dbReference type="GO" id="GO:0005524">
    <property type="term" value="F:ATP binding"/>
    <property type="evidence" value="ECO:0007669"/>
    <property type="project" value="UniProtKB-KW"/>
</dbReference>
<dbReference type="GO" id="GO:0004592">
    <property type="term" value="F:pantoate-beta-alanine ligase activity"/>
    <property type="evidence" value="ECO:0007669"/>
    <property type="project" value="UniProtKB-UniRule"/>
</dbReference>
<dbReference type="GO" id="GO:0015940">
    <property type="term" value="P:pantothenate biosynthetic process"/>
    <property type="evidence" value="ECO:0007669"/>
    <property type="project" value="UniProtKB-UniRule"/>
</dbReference>
<dbReference type="CDD" id="cd00560">
    <property type="entry name" value="PanC"/>
    <property type="match status" value="1"/>
</dbReference>
<dbReference type="FunFam" id="3.30.1300.10:FF:000001">
    <property type="entry name" value="Pantothenate synthetase"/>
    <property type="match status" value="1"/>
</dbReference>
<dbReference type="FunFam" id="3.40.50.620:FF:000013">
    <property type="entry name" value="Pantothenate synthetase"/>
    <property type="match status" value="1"/>
</dbReference>
<dbReference type="Gene3D" id="3.40.50.620">
    <property type="entry name" value="HUPs"/>
    <property type="match status" value="1"/>
</dbReference>
<dbReference type="Gene3D" id="3.30.1300.10">
    <property type="entry name" value="Pantoate-beta-alanine ligase, C-terminal domain"/>
    <property type="match status" value="1"/>
</dbReference>
<dbReference type="HAMAP" id="MF_00158">
    <property type="entry name" value="PanC"/>
    <property type="match status" value="1"/>
</dbReference>
<dbReference type="InterPro" id="IPR004821">
    <property type="entry name" value="Cyt_trans-like"/>
</dbReference>
<dbReference type="InterPro" id="IPR003721">
    <property type="entry name" value="Pantoate_ligase"/>
</dbReference>
<dbReference type="InterPro" id="IPR042176">
    <property type="entry name" value="Pantoate_ligase_C"/>
</dbReference>
<dbReference type="InterPro" id="IPR014729">
    <property type="entry name" value="Rossmann-like_a/b/a_fold"/>
</dbReference>
<dbReference type="NCBIfam" id="TIGR00125">
    <property type="entry name" value="cyt_tran_rel"/>
    <property type="match status" value="1"/>
</dbReference>
<dbReference type="NCBIfam" id="TIGR00018">
    <property type="entry name" value="panC"/>
    <property type="match status" value="1"/>
</dbReference>
<dbReference type="PANTHER" id="PTHR21299">
    <property type="entry name" value="CYTIDYLATE KINASE/PANTOATE-BETA-ALANINE LIGASE"/>
    <property type="match status" value="1"/>
</dbReference>
<dbReference type="PANTHER" id="PTHR21299:SF1">
    <property type="entry name" value="PANTOATE--BETA-ALANINE LIGASE"/>
    <property type="match status" value="1"/>
</dbReference>
<dbReference type="Pfam" id="PF02569">
    <property type="entry name" value="Pantoate_ligase"/>
    <property type="match status" value="1"/>
</dbReference>
<dbReference type="SUPFAM" id="SSF52374">
    <property type="entry name" value="Nucleotidylyl transferase"/>
    <property type="match status" value="1"/>
</dbReference>
<accession>C1DFJ9</accession>
<reference key="1">
    <citation type="journal article" date="2009" name="J. Bacteriol.">
        <title>Genome sequence of Azotobacter vinelandii, an obligate aerobe specialized to support diverse anaerobic metabolic processes.</title>
        <authorList>
            <person name="Setubal J.C."/>
            <person name="Dos Santos P."/>
            <person name="Goldman B.S."/>
            <person name="Ertesvaag H."/>
            <person name="Espin G."/>
            <person name="Rubio L.M."/>
            <person name="Valla S."/>
            <person name="Almeida N.F."/>
            <person name="Balasubramanian D."/>
            <person name="Cromes L."/>
            <person name="Curatti L."/>
            <person name="Du Z."/>
            <person name="Godsy E."/>
            <person name="Goodner B."/>
            <person name="Hellner-Burris K."/>
            <person name="Hernandez J.A."/>
            <person name="Houmiel K."/>
            <person name="Imperial J."/>
            <person name="Kennedy C."/>
            <person name="Larson T.J."/>
            <person name="Latreille P."/>
            <person name="Ligon L.S."/>
            <person name="Lu J."/>
            <person name="Maerk M."/>
            <person name="Miller N.M."/>
            <person name="Norton S."/>
            <person name="O'Carroll I.P."/>
            <person name="Paulsen I."/>
            <person name="Raulfs E.C."/>
            <person name="Roemer R."/>
            <person name="Rosser J."/>
            <person name="Segura D."/>
            <person name="Slater S."/>
            <person name="Stricklin S.L."/>
            <person name="Studholme D.J."/>
            <person name="Sun J."/>
            <person name="Viana C.J."/>
            <person name="Wallin E."/>
            <person name="Wang B."/>
            <person name="Wheeler C."/>
            <person name="Zhu H."/>
            <person name="Dean D.R."/>
            <person name="Dixon R."/>
            <person name="Wood D."/>
        </authorList>
    </citation>
    <scope>NUCLEOTIDE SEQUENCE [LARGE SCALE GENOMIC DNA]</scope>
    <source>
        <strain>DJ / ATCC BAA-1303</strain>
    </source>
</reference>
<organism>
    <name type="scientific">Azotobacter vinelandii (strain DJ / ATCC BAA-1303)</name>
    <dbReference type="NCBI Taxonomy" id="322710"/>
    <lineage>
        <taxon>Bacteria</taxon>
        <taxon>Pseudomonadati</taxon>
        <taxon>Pseudomonadota</taxon>
        <taxon>Gammaproteobacteria</taxon>
        <taxon>Pseudomonadales</taxon>
        <taxon>Pseudomonadaceae</taxon>
        <taxon>Azotobacter</taxon>
    </lineage>
</organism>
<comment type="function">
    <text evidence="1">Catalyzes the condensation of pantoate with beta-alanine in an ATP-dependent reaction via a pantoyl-adenylate intermediate.</text>
</comment>
<comment type="catalytic activity">
    <reaction evidence="1">
        <text>(R)-pantoate + beta-alanine + ATP = (R)-pantothenate + AMP + diphosphate + H(+)</text>
        <dbReference type="Rhea" id="RHEA:10912"/>
        <dbReference type="ChEBI" id="CHEBI:15378"/>
        <dbReference type="ChEBI" id="CHEBI:15980"/>
        <dbReference type="ChEBI" id="CHEBI:29032"/>
        <dbReference type="ChEBI" id="CHEBI:30616"/>
        <dbReference type="ChEBI" id="CHEBI:33019"/>
        <dbReference type="ChEBI" id="CHEBI:57966"/>
        <dbReference type="ChEBI" id="CHEBI:456215"/>
        <dbReference type="EC" id="6.3.2.1"/>
    </reaction>
</comment>
<comment type="pathway">
    <text evidence="1">Cofactor biosynthesis; (R)-pantothenate biosynthesis; (R)-pantothenate from (R)-pantoate and beta-alanine: step 1/1.</text>
</comment>
<comment type="subunit">
    <text evidence="1">Homodimer.</text>
</comment>
<comment type="subcellular location">
    <subcellularLocation>
        <location evidence="1">Cytoplasm</location>
    </subcellularLocation>
</comment>
<comment type="miscellaneous">
    <text evidence="1">The reaction proceeds by a bi uni uni bi ping pong mechanism.</text>
</comment>
<comment type="similarity">
    <text evidence="1">Belongs to the pantothenate synthetase family.</text>
</comment>
<name>PANC_AZOVD</name>
<gene>
    <name evidence="1" type="primary">panC</name>
    <name type="ordered locus">Avin_42720</name>
</gene>
<keyword id="KW-0067">ATP-binding</keyword>
<keyword id="KW-0963">Cytoplasm</keyword>
<keyword id="KW-0436">Ligase</keyword>
<keyword id="KW-0547">Nucleotide-binding</keyword>
<keyword id="KW-0566">Pantothenate biosynthesis</keyword>
<evidence type="ECO:0000255" key="1">
    <source>
        <dbReference type="HAMAP-Rule" id="MF_00158"/>
    </source>
</evidence>